<sequence>MKYQQLENLECGWKWKYLIKKWKDGEAVTRYIDTSEADAAIAELRKLEHEPTQVLAWIENHMSEALDNKLKQAIRAKRKRHFNAEQVHTKKKSIDLDYRVWEKLSNRANELGCTLSDAIEYLLSEASRSEKASMKVSSLKEDLSKLLSS</sequence>
<gene>
    <name evidence="1" type="primary">matP</name>
    <name type="ordered locus">VIBHAR_02330</name>
</gene>
<proteinExistence type="inferred from homology"/>
<reference key="1">
    <citation type="submission" date="2007-08" db="EMBL/GenBank/DDBJ databases">
        <authorList>
            <consortium name="The Vibrio harveyi Genome Sequencing Project"/>
            <person name="Bassler B."/>
            <person name="Clifton S.W."/>
            <person name="Fulton L."/>
            <person name="Delehaunty K."/>
            <person name="Fronick C."/>
            <person name="Harrison M."/>
            <person name="Markivic C."/>
            <person name="Fulton R."/>
            <person name="Tin-Wollam A.-M."/>
            <person name="Shah N."/>
            <person name="Pepin K."/>
            <person name="Nash W."/>
            <person name="Thiruvilangam P."/>
            <person name="Bhonagiri V."/>
            <person name="Waters C."/>
            <person name="Tu K.C."/>
            <person name="Irgon J."/>
            <person name="Wilson R.K."/>
        </authorList>
    </citation>
    <scope>NUCLEOTIDE SEQUENCE [LARGE SCALE GENOMIC DNA]</scope>
    <source>
        <strain>ATCC BAA-1116 / BB120</strain>
    </source>
</reference>
<feature type="chain" id="PRO_1000064639" description="Macrodomain Ter protein">
    <location>
        <begin position="1"/>
        <end position="149"/>
    </location>
</feature>
<organism>
    <name type="scientific">Vibrio campbellii (strain ATCC BAA-1116)</name>
    <dbReference type="NCBI Taxonomy" id="2902295"/>
    <lineage>
        <taxon>Bacteria</taxon>
        <taxon>Pseudomonadati</taxon>
        <taxon>Pseudomonadota</taxon>
        <taxon>Gammaproteobacteria</taxon>
        <taxon>Vibrionales</taxon>
        <taxon>Vibrionaceae</taxon>
        <taxon>Vibrio</taxon>
    </lineage>
</organism>
<comment type="function">
    <text evidence="1">Required for spatial organization of the terminus region of the chromosome (Ter macrodomain) during the cell cycle. Prevents early segregation of duplicated Ter macrodomains during cell division. Binds specifically to matS, which is a 13 bp signature motif repeated within the Ter macrodomain.</text>
</comment>
<comment type="subunit">
    <text evidence="1">Homodimer.</text>
</comment>
<comment type="subcellular location">
    <subcellularLocation>
        <location evidence="1">Cytoplasm</location>
    </subcellularLocation>
</comment>
<comment type="similarity">
    <text evidence="1">Belongs to the MatP family.</text>
</comment>
<dbReference type="EMBL" id="CP000789">
    <property type="protein sequence ID" value="ABU71292.1"/>
    <property type="molecule type" value="Genomic_DNA"/>
</dbReference>
<dbReference type="RefSeq" id="WP_012128006.1">
    <property type="nucleotide sequence ID" value="NC_009783.1"/>
</dbReference>
<dbReference type="SMR" id="A7N0M1"/>
<dbReference type="GeneID" id="67377349"/>
<dbReference type="KEGG" id="vha:VIBHAR_02330"/>
<dbReference type="PATRIC" id="fig|338187.25.peg.373"/>
<dbReference type="Proteomes" id="UP000008152">
    <property type="component" value="Chromosome I"/>
</dbReference>
<dbReference type="GO" id="GO:0005737">
    <property type="term" value="C:cytoplasm"/>
    <property type="evidence" value="ECO:0007669"/>
    <property type="project" value="UniProtKB-SubCell"/>
</dbReference>
<dbReference type="GO" id="GO:0043565">
    <property type="term" value="F:sequence-specific DNA binding"/>
    <property type="evidence" value="ECO:0007669"/>
    <property type="project" value="UniProtKB-UniRule"/>
</dbReference>
<dbReference type="GO" id="GO:0051301">
    <property type="term" value="P:cell division"/>
    <property type="evidence" value="ECO:0007669"/>
    <property type="project" value="UniProtKB-UniRule"/>
</dbReference>
<dbReference type="GO" id="GO:0006355">
    <property type="term" value="P:regulation of DNA-templated transcription"/>
    <property type="evidence" value="ECO:0007669"/>
    <property type="project" value="InterPro"/>
</dbReference>
<dbReference type="Gene3D" id="1.20.1270.380">
    <property type="entry name" value="MatP, N-terminal domain"/>
    <property type="match status" value="1"/>
</dbReference>
<dbReference type="Gene3D" id="1.10.1220.10">
    <property type="entry name" value="Met repressor-like"/>
    <property type="match status" value="1"/>
</dbReference>
<dbReference type="HAMAP" id="MF_01073">
    <property type="entry name" value="MatP"/>
    <property type="match status" value="1"/>
</dbReference>
<dbReference type="InterPro" id="IPR013321">
    <property type="entry name" value="Arc_rbn_hlx_hlx"/>
</dbReference>
<dbReference type="InterPro" id="IPR009390">
    <property type="entry name" value="MatP"/>
</dbReference>
<dbReference type="InterPro" id="IPR035375">
    <property type="entry name" value="MatP_C"/>
</dbReference>
<dbReference type="InterPro" id="IPR035087">
    <property type="entry name" value="MatP_N"/>
</dbReference>
<dbReference type="InterPro" id="IPR038339">
    <property type="entry name" value="MatP_N_sf"/>
</dbReference>
<dbReference type="NCBIfam" id="NF003471">
    <property type="entry name" value="PRK05097.1"/>
    <property type="match status" value="1"/>
</dbReference>
<dbReference type="Pfam" id="PF06303">
    <property type="entry name" value="MatP"/>
    <property type="match status" value="1"/>
</dbReference>
<dbReference type="Pfam" id="PF17414">
    <property type="entry name" value="MatP_C"/>
    <property type="match status" value="1"/>
</dbReference>
<protein>
    <recommendedName>
        <fullName evidence="1">Macrodomain Ter protein</fullName>
    </recommendedName>
</protein>
<evidence type="ECO:0000255" key="1">
    <source>
        <dbReference type="HAMAP-Rule" id="MF_01073"/>
    </source>
</evidence>
<accession>A7N0M1</accession>
<name>MATP_VIBC1</name>
<keyword id="KW-0131">Cell cycle</keyword>
<keyword id="KW-0132">Cell division</keyword>
<keyword id="KW-0963">Cytoplasm</keyword>
<keyword id="KW-0238">DNA-binding</keyword>